<name>RL34_SYNE7</name>
<feature type="chain" id="PRO_1000013475" description="Large ribosomal subunit protein bL34">
    <location>
        <begin position="1"/>
        <end position="45"/>
    </location>
</feature>
<feature type="region of interest" description="Disordered" evidence="2">
    <location>
        <begin position="1"/>
        <end position="27"/>
    </location>
</feature>
<feature type="compositionally biased region" description="Basic and acidic residues" evidence="2">
    <location>
        <begin position="1"/>
        <end position="10"/>
    </location>
</feature>
<feature type="compositionally biased region" description="Basic residues" evidence="2">
    <location>
        <begin position="11"/>
        <end position="23"/>
    </location>
</feature>
<protein>
    <recommendedName>
        <fullName evidence="1">Large ribosomal subunit protein bL34</fullName>
    </recommendedName>
    <alternativeName>
        <fullName evidence="3">50S ribosomal protein L34</fullName>
    </alternativeName>
</protein>
<reference key="1">
    <citation type="submission" date="2005-08" db="EMBL/GenBank/DDBJ databases">
        <title>Complete sequence of chromosome 1 of Synechococcus elongatus PCC 7942.</title>
        <authorList>
            <consortium name="US DOE Joint Genome Institute"/>
            <person name="Copeland A."/>
            <person name="Lucas S."/>
            <person name="Lapidus A."/>
            <person name="Barry K."/>
            <person name="Detter J.C."/>
            <person name="Glavina T."/>
            <person name="Hammon N."/>
            <person name="Israni S."/>
            <person name="Pitluck S."/>
            <person name="Schmutz J."/>
            <person name="Larimer F."/>
            <person name="Land M."/>
            <person name="Kyrpides N."/>
            <person name="Lykidis A."/>
            <person name="Golden S."/>
            <person name="Richardson P."/>
        </authorList>
    </citation>
    <scope>NUCLEOTIDE SEQUENCE [LARGE SCALE GENOMIC DNA]</scope>
    <source>
        <strain>ATCC 33912 / PCC 7942 / FACHB-805</strain>
    </source>
</reference>
<sequence length="45" mass="5230">MTKRTLEGTNRKRKRTSGFRARMRSATGRRVIKARRSKGRARLAV</sequence>
<comment type="similarity">
    <text evidence="1">Belongs to the bacterial ribosomal protein bL34 family.</text>
</comment>
<organism>
    <name type="scientific">Synechococcus elongatus (strain ATCC 33912 / PCC 7942 / FACHB-805)</name>
    <name type="common">Anacystis nidulans R2</name>
    <dbReference type="NCBI Taxonomy" id="1140"/>
    <lineage>
        <taxon>Bacteria</taxon>
        <taxon>Bacillati</taxon>
        <taxon>Cyanobacteriota</taxon>
        <taxon>Cyanophyceae</taxon>
        <taxon>Synechococcales</taxon>
        <taxon>Synechococcaceae</taxon>
        <taxon>Synechococcus</taxon>
    </lineage>
</organism>
<gene>
    <name evidence="1" type="primary">rpmH</name>
    <name evidence="1" type="synonym">rpl34</name>
    <name type="ordered locus">Synpcc7942_1614</name>
</gene>
<dbReference type="EMBL" id="CP000100">
    <property type="protein sequence ID" value="ABB57644.1"/>
    <property type="molecule type" value="Genomic_DNA"/>
</dbReference>
<dbReference type="RefSeq" id="WP_011242384.1">
    <property type="nucleotide sequence ID" value="NZ_JACJTX010000004.1"/>
</dbReference>
<dbReference type="SMR" id="Q31MS5"/>
<dbReference type="STRING" id="1140.Synpcc7942_1614"/>
<dbReference type="PaxDb" id="1140-Synpcc7942_1614"/>
<dbReference type="GeneID" id="72430347"/>
<dbReference type="KEGG" id="syf:Synpcc7942_1614"/>
<dbReference type="eggNOG" id="COG0230">
    <property type="taxonomic scope" value="Bacteria"/>
</dbReference>
<dbReference type="HOGENOM" id="CLU_129938_2_1_3"/>
<dbReference type="OrthoDB" id="9804164at2"/>
<dbReference type="BioCyc" id="SYNEL:SYNPCC7942_1614-MONOMER"/>
<dbReference type="Proteomes" id="UP000889800">
    <property type="component" value="Chromosome"/>
</dbReference>
<dbReference type="GO" id="GO:1990904">
    <property type="term" value="C:ribonucleoprotein complex"/>
    <property type="evidence" value="ECO:0007669"/>
    <property type="project" value="UniProtKB-KW"/>
</dbReference>
<dbReference type="GO" id="GO:0005840">
    <property type="term" value="C:ribosome"/>
    <property type="evidence" value="ECO:0007669"/>
    <property type="project" value="UniProtKB-KW"/>
</dbReference>
<dbReference type="GO" id="GO:0003735">
    <property type="term" value="F:structural constituent of ribosome"/>
    <property type="evidence" value="ECO:0007669"/>
    <property type="project" value="InterPro"/>
</dbReference>
<dbReference type="GO" id="GO:0006412">
    <property type="term" value="P:translation"/>
    <property type="evidence" value="ECO:0007669"/>
    <property type="project" value="UniProtKB-UniRule"/>
</dbReference>
<dbReference type="Gene3D" id="1.10.287.3980">
    <property type="match status" value="1"/>
</dbReference>
<dbReference type="HAMAP" id="MF_00391">
    <property type="entry name" value="Ribosomal_bL34"/>
    <property type="match status" value="1"/>
</dbReference>
<dbReference type="InterPro" id="IPR000271">
    <property type="entry name" value="Ribosomal_bL34"/>
</dbReference>
<dbReference type="InterPro" id="IPR020939">
    <property type="entry name" value="Ribosomal_bL34_CS"/>
</dbReference>
<dbReference type="NCBIfam" id="TIGR01030">
    <property type="entry name" value="rpmH_bact"/>
    <property type="match status" value="1"/>
</dbReference>
<dbReference type="Pfam" id="PF00468">
    <property type="entry name" value="Ribosomal_L34"/>
    <property type="match status" value="1"/>
</dbReference>
<dbReference type="PROSITE" id="PS00784">
    <property type="entry name" value="RIBOSOMAL_L34"/>
    <property type="match status" value="1"/>
</dbReference>
<accession>Q31MS5</accession>
<evidence type="ECO:0000255" key="1">
    <source>
        <dbReference type="HAMAP-Rule" id="MF_00391"/>
    </source>
</evidence>
<evidence type="ECO:0000256" key="2">
    <source>
        <dbReference type="SAM" id="MobiDB-lite"/>
    </source>
</evidence>
<evidence type="ECO:0000305" key="3"/>
<keyword id="KW-1185">Reference proteome</keyword>
<keyword id="KW-0687">Ribonucleoprotein</keyword>
<keyword id="KW-0689">Ribosomal protein</keyword>
<proteinExistence type="inferred from homology"/>